<name>YOBD_ECOHS</name>
<gene>
    <name evidence="1" type="primary">yobD</name>
    <name type="ordered locus">EcHS_A1910</name>
</gene>
<sequence>MTITDLVLILFIAALLAFAIYDQFIMPRRNGPTLLAIPLLRRGRIDSVIFVGLIVILIYNNVTNHGALITTWLLSALALMGFYIFWIRVPKIIFKQKGFFFANVWIEYSRIKAMNLSEDGVLVMQLEQRRLLIRVRNIDDLEKIYKLLVSTQ</sequence>
<comment type="subcellular location">
    <subcellularLocation>
        <location evidence="1">Cell inner membrane</location>
        <topology evidence="1">Multi-pass membrane protein</topology>
    </subcellularLocation>
</comment>
<comment type="similarity">
    <text evidence="1">Belongs to the UPF0266 family.</text>
</comment>
<evidence type="ECO:0000255" key="1">
    <source>
        <dbReference type="HAMAP-Rule" id="MF_01071"/>
    </source>
</evidence>
<accession>A8A117</accession>
<keyword id="KW-0997">Cell inner membrane</keyword>
<keyword id="KW-1003">Cell membrane</keyword>
<keyword id="KW-0472">Membrane</keyword>
<keyword id="KW-0812">Transmembrane</keyword>
<keyword id="KW-1133">Transmembrane helix</keyword>
<protein>
    <recommendedName>
        <fullName evidence="1">UPF0266 membrane protein YobD</fullName>
    </recommendedName>
</protein>
<feature type="chain" id="PRO_1000064580" description="UPF0266 membrane protein YobD">
    <location>
        <begin position="1"/>
        <end position="152"/>
    </location>
</feature>
<feature type="transmembrane region" description="Helical" evidence="1">
    <location>
        <begin position="6"/>
        <end position="26"/>
    </location>
</feature>
<feature type="transmembrane region" description="Helical" evidence="1">
    <location>
        <begin position="45"/>
        <end position="65"/>
    </location>
</feature>
<feature type="transmembrane region" description="Helical" evidence="1">
    <location>
        <begin position="67"/>
        <end position="87"/>
    </location>
</feature>
<dbReference type="EMBL" id="CP000802">
    <property type="protein sequence ID" value="ABV06221.1"/>
    <property type="molecule type" value="Genomic_DNA"/>
</dbReference>
<dbReference type="RefSeq" id="WP_000156255.1">
    <property type="nucleotide sequence ID" value="NC_009800.1"/>
</dbReference>
<dbReference type="KEGG" id="ecx:EcHS_A1910"/>
<dbReference type="HOGENOM" id="CLU_133645_0_0_6"/>
<dbReference type="GO" id="GO:0005886">
    <property type="term" value="C:plasma membrane"/>
    <property type="evidence" value="ECO:0007669"/>
    <property type="project" value="UniProtKB-SubCell"/>
</dbReference>
<dbReference type="HAMAP" id="MF_01071">
    <property type="entry name" value="UPF0266"/>
    <property type="match status" value="1"/>
</dbReference>
<dbReference type="InterPro" id="IPR009328">
    <property type="entry name" value="DUF986"/>
</dbReference>
<dbReference type="NCBIfam" id="NF002791">
    <property type="entry name" value="PRK02913.1"/>
    <property type="match status" value="1"/>
</dbReference>
<dbReference type="Pfam" id="PF06173">
    <property type="entry name" value="DUF986"/>
    <property type="match status" value="1"/>
</dbReference>
<dbReference type="PIRSF" id="PIRSF020687">
    <property type="entry name" value="UCP020687"/>
    <property type="match status" value="1"/>
</dbReference>
<proteinExistence type="inferred from homology"/>
<reference key="1">
    <citation type="journal article" date="2008" name="J. Bacteriol.">
        <title>The pangenome structure of Escherichia coli: comparative genomic analysis of E. coli commensal and pathogenic isolates.</title>
        <authorList>
            <person name="Rasko D.A."/>
            <person name="Rosovitz M.J."/>
            <person name="Myers G.S.A."/>
            <person name="Mongodin E.F."/>
            <person name="Fricke W.F."/>
            <person name="Gajer P."/>
            <person name="Crabtree J."/>
            <person name="Sebaihia M."/>
            <person name="Thomson N.R."/>
            <person name="Chaudhuri R."/>
            <person name="Henderson I.R."/>
            <person name="Sperandio V."/>
            <person name="Ravel J."/>
        </authorList>
    </citation>
    <scope>NUCLEOTIDE SEQUENCE [LARGE SCALE GENOMIC DNA]</scope>
    <source>
        <strain>HS</strain>
    </source>
</reference>
<organism>
    <name type="scientific">Escherichia coli O9:H4 (strain HS)</name>
    <dbReference type="NCBI Taxonomy" id="331112"/>
    <lineage>
        <taxon>Bacteria</taxon>
        <taxon>Pseudomonadati</taxon>
        <taxon>Pseudomonadota</taxon>
        <taxon>Gammaproteobacteria</taxon>
        <taxon>Enterobacterales</taxon>
        <taxon>Enterobacteriaceae</taxon>
        <taxon>Escherichia</taxon>
    </lineage>
</organism>